<protein>
    <recommendedName>
        <fullName evidence="1">Thymidylate synthase</fullName>
        <shortName evidence="1">TS</shortName>
        <shortName evidence="1">TSase</shortName>
        <ecNumber evidence="1">2.1.1.45</ecNumber>
    </recommendedName>
</protein>
<organism>
    <name type="scientific">Listeria monocytogenes serotype 4a (strain HCC23)</name>
    <dbReference type="NCBI Taxonomy" id="552536"/>
    <lineage>
        <taxon>Bacteria</taxon>
        <taxon>Bacillati</taxon>
        <taxon>Bacillota</taxon>
        <taxon>Bacilli</taxon>
        <taxon>Bacillales</taxon>
        <taxon>Listeriaceae</taxon>
        <taxon>Listeria</taxon>
    </lineage>
</organism>
<reference key="1">
    <citation type="journal article" date="2011" name="J. Bacteriol.">
        <title>Genome sequence of lineage III Listeria monocytogenes strain HCC23.</title>
        <authorList>
            <person name="Steele C.L."/>
            <person name="Donaldson J.R."/>
            <person name="Paul D."/>
            <person name="Banes M.M."/>
            <person name="Arick T."/>
            <person name="Bridges S.M."/>
            <person name="Lawrence M.L."/>
        </authorList>
    </citation>
    <scope>NUCLEOTIDE SEQUENCE [LARGE SCALE GENOMIC DNA]</scope>
    <source>
        <strain>HCC23</strain>
    </source>
</reference>
<dbReference type="EC" id="2.1.1.45" evidence="1"/>
<dbReference type="EMBL" id="CP001175">
    <property type="protein sequence ID" value="ACK39037.1"/>
    <property type="molecule type" value="Genomic_DNA"/>
</dbReference>
<dbReference type="RefSeq" id="WP_012581093.1">
    <property type="nucleotide sequence ID" value="NC_011660.1"/>
</dbReference>
<dbReference type="SMR" id="B8DDM8"/>
<dbReference type="KEGG" id="lmh:LMHCC_0682"/>
<dbReference type="HOGENOM" id="CLU_021669_0_0_9"/>
<dbReference type="UniPathway" id="UPA00575"/>
<dbReference type="GO" id="GO:0005829">
    <property type="term" value="C:cytosol"/>
    <property type="evidence" value="ECO:0007669"/>
    <property type="project" value="TreeGrafter"/>
</dbReference>
<dbReference type="GO" id="GO:0004799">
    <property type="term" value="F:thymidylate synthase activity"/>
    <property type="evidence" value="ECO:0007669"/>
    <property type="project" value="UniProtKB-UniRule"/>
</dbReference>
<dbReference type="GO" id="GO:0006231">
    <property type="term" value="P:dTMP biosynthetic process"/>
    <property type="evidence" value="ECO:0007669"/>
    <property type="project" value="UniProtKB-UniRule"/>
</dbReference>
<dbReference type="GO" id="GO:0006235">
    <property type="term" value="P:dTTP biosynthetic process"/>
    <property type="evidence" value="ECO:0007669"/>
    <property type="project" value="UniProtKB-UniRule"/>
</dbReference>
<dbReference type="GO" id="GO:0032259">
    <property type="term" value="P:methylation"/>
    <property type="evidence" value="ECO:0007669"/>
    <property type="project" value="UniProtKB-KW"/>
</dbReference>
<dbReference type="CDD" id="cd00351">
    <property type="entry name" value="TS_Pyrimidine_HMase"/>
    <property type="match status" value="1"/>
</dbReference>
<dbReference type="Gene3D" id="3.30.572.10">
    <property type="entry name" value="Thymidylate synthase/dCMP hydroxymethylase domain"/>
    <property type="match status" value="1"/>
</dbReference>
<dbReference type="HAMAP" id="MF_00008">
    <property type="entry name" value="Thymidy_synth_bact"/>
    <property type="match status" value="1"/>
</dbReference>
<dbReference type="InterPro" id="IPR045097">
    <property type="entry name" value="Thymidate_synth/dCMP_Mease"/>
</dbReference>
<dbReference type="InterPro" id="IPR023451">
    <property type="entry name" value="Thymidate_synth/dCMP_Mease_dom"/>
</dbReference>
<dbReference type="InterPro" id="IPR036926">
    <property type="entry name" value="Thymidate_synth/dCMP_Mease_sf"/>
</dbReference>
<dbReference type="InterPro" id="IPR000398">
    <property type="entry name" value="Thymidylate_synthase"/>
</dbReference>
<dbReference type="InterPro" id="IPR020940">
    <property type="entry name" value="Thymidylate_synthase_AS"/>
</dbReference>
<dbReference type="NCBIfam" id="NF002496">
    <property type="entry name" value="PRK01827.1-2"/>
    <property type="match status" value="1"/>
</dbReference>
<dbReference type="NCBIfam" id="TIGR03284">
    <property type="entry name" value="thym_sym"/>
    <property type="match status" value="1"/>
</dbReference>
<dbReference type="PANTHER" id="PTHR11548:SF9">
    <property type="entry name" value="THYMIDYLATE SYNTHASE"/>
    <property type="match status" value="1"/>
</dbReference>
<dbReference type="PANTHER" id="PTHR11548">
    <property type="entry name" value="THYMIDYLATE SYNTHASE 1"/>
    <property type="match status" value="1"/>
</dbReference>
<dbReference type="Pfam" id="PF00303">
    <property type="entry name" value="Thymidylat_synt"/>
    <property type="match status" value="1"/>
</dbReference>
<dbReference type="PRINTS" id="PR00108">
    <property type="entry name" value="THYMDSNTHASE"/>
</dbReference>
<dbReference type="SUPFAM" id="SSF55831">
    <property type="entry name" value="Thymidylate synthase/dCMP hydroxymethylase"/>
    <property type="match status" value="1"/>
</dbReference>
<dbReference type="PROSITE" id="PS00091">
    <property type="entry name" value="THYMIDYLATE_SYNTHASE"/>
    <property type="match status" value="1"/>
</dbReference>
<proteinExistence type="inferred from homology"/>
<name>TYSY_LISMH</name>
<sequence length="314" mass="36217">MKQYLDLEKYVLENGTQKGDRTGTGTISTFGYQMRFDLQEGFPIMTTKRVPFKLVVSELLWFLHGDTNIRYLLQHNNNIWNEWAFERFVKSDDYKGEDMTDFGLRAERDPAFKEVYQAEMEKFKTRILEDEAFANKYGELGNIYGKQWREWKTSQGETIDQLADLIEMIKTNPNSRRLIVSAWNPEDIPNMALPPCHSLFQFYVADGKLSCQLYQRSADIFLGVPFNIASYALLTHLIAREVGLEVGEFIHTMGDAHLYNNHIEQVKEQLSRTPHKLPKLVLSDKPATIFDFDVADISLDGYNPDPAIKAPISV</sequence>
<keyword id="KW-0963">Cytoplasm</keyword>
<keyword id="KW-0489">Methyltransferase</keyword>
<keyword id="KW-0545">Nucleotide biosynthesis</keyword>
<keyword id="KW-0808">Transferase</keyword>
<accession>B8DDM8</accession>
<gene>
    <name evidence="1" type="primary">thyA</name>
    <name type="ordered locus">LMHCC_0682</name>
</gene>
<feature type="chain" id="PRO_1000197250" description="Thymidylate synthase">
    <location>
        <begin position="1"/>
        <end position="314"/>
    </location>
</feature>
<feature type="active site" description="Nucleophile" evidence="1">
    <location>
        <position position="196"/>
    </location>
</feature>
<feature type="binding site" description="in other chain" evidence="1">
    <location>
        <position position="21"/>
    </location>
    <ligand>
        <name>dUMP</name>
        <dbReference type="ChEBI" id="CHEBI:246422"/>
        <note>ligand shared between dimeric partners</note>
    </ligand>
</feature>
<feature type="binding site" evidence="1">
    <location>
        <begin position="176"/>
        <end position="177"/>
    </location>
    <ligand>
        <name>dUMP</name>
        <dbReference type="ChEBI" id="CHEBI:246422"/>
        <note>ligand shared between dimeric partners</note>
    </ligand>
</feature>
<feature type="binding site" description="in other chain" evidence="1">
    <location>
        <begin position="216"/>
        <end position="219"/>
    </location>
    <ligand>
        <name>dUMP</name>
        <dbReference type="ChEBI" id="CHEBI:246422"/>
        <note>ligand shared between dimeric partners</note>
    </ligand>
</feature>
<feature type="binding site" evidence="1">
    <location>
        <position position="219"/>
    </location>
    <ligand>
        <name>(6R)-5,10-methylene-5,6,7,8-tetrahydrofolate</name>
        <dbReference type="ChEBI" id="CHEBI:15636"/>
    </ligand>
</feature>
<feature type="binding site" description="in other chain" evidence="1">
    <location>
        <position position="227"/>
    </location>
    <ligand>
        <name>dUMP</name>
        <dbReference type="ChEBI" id="CHEBI:246422"/>
        <note>ligand shared between dimeric partners</note>
    </ligand>
</feature>
<feature type="binding site" description="in other chain" evidence="1">
    <location>
        <begin position="257"/>
        <end position="259"/>
    </location>
    <ligand>
        <name>dUMP</name>
        <dbReference type="ChEBI" id="CHEBI:246422"/>
        <note>ligand shared between dimeric partners</note>
    </ligand>
</feature>
<feature type="binding site" evidence="1">
    <location>
        <position position="313"/>
    </location>
    <ligand>
        <name>(6R)-5,10-methylene-5,6,7,8-tetrahydrofolate</name>
        <dbReference type="ChEBI" id="CHEBI:15636"/>
    </ligand>
</feature>
<comment type="function">
    <text evidence="1">Catalyzes the reductive methylation of 2'-deoxyuridine-5'-monophosphate (dUMP) to 2'-deoxythymidine-5'-monophosphate (dTMP) while utilizing 5,10-methylenetetrahydrofolate (mTHF) as the methyl donor and reductant in the reaction, yielding dihydrofolate (DHF) as a by-product. This enzymatic reaction provides an intracellular de novo source of dTMP, an essential precursor for DNA biosynthesis.</text>
</comment>
<comment type="catalytic activity">
    <reaction evidence="1">
        <text>dUMP + (6R)-5,10-methylene-5,6,7,8-tetrahydrofolate = 7,8-dihydrofolate + dTMP</text>
        <dbReference type="Rhea" id="RHEA:12104"/>
        <dbReference type="ChEBI" id="CHEBI:15636"/>
        <dbReference type="ChEBI" id="CHEBI:57451"/>
        <dbReference type="ChEBI" id="CHEBI:63528"/>
        <dbReference type="ChEBI" id="CHEBI:246422"/>
        <dbReference type="EC" id="2.1.1.45"/>
    </reaction>
</comment>
<comment type="pathway">
    <text evidence="1">Pyrimidine metabolism; dTTP biosynthesis.</text>
</comment>
<comment type="subunit">
    <text evidence="1">Homodimer.</text>
</comment>
<comment type="subcellular location">
    <subcellularLocation>
        <location evidence="1">Cytoplasm</location>
    </subcellularLocation>
</comment>
<comment type="similarity">
    <text evidence="1">Belongs to the thymidylate synthase family. Bacterial-type ThyA subfamily.</text>
</comment>
<evidence type="ECO:0000255" key="1">
    <source>
        <dbReference type="HAMAP-Rule" id="MF_00008"/>
    </source>
</evidence>